<accession>P94594</accession>
<organism>
    <name type="scientific">Bacillus thuringiensis subsp. medellin</name>
    <dbReference type="NCBI Taxonomy" id="79672"/>
    <lineage>
        <taxon>Bacteria</taxon>
        <taxon>Bacillati</taxon>
        <taxon>Bacillota</taxon>
        <taxon>Bacilli</taxon>
        <taxon>Bacillales</taxon>
        <taxon>Bacillaceae</taxon>
        <taxon>Bacillus</taxon>
        <taxon>Bacillus cereus group</taxon>
    </lineage>
</organism>
<reference key="1">
    <citation type="journal article" date="1997" name="Appl. Environ. Microbiol.">
        <title>Identification of a gene for Cyt1A-like hemolysin from Bacillus thuringiensis subsp. medellin and expression in a crystal-negative B. thuringiensis strain.</title>
        <authorList>
            <person name="Thiery I."/>
            <person name="Delecluse A."/>
            <person name="Tamayo M.C."/>
            <person name="Orduz S."/>
        </authorList>
    </citation>
    <scope>NUCLEOTIDE SEQUENCE [GENOMIC DNA]</scope>
    <source>
        <strain>H30 / 163-131</strain>
    </source>
</reference>
<sequence length="250" mass="27507">MENPNHCPLEDIQVNPWKTPQSKARVITLRIDDPNEINNLLSINEIENTNYLLQAIMLANAFQKALVPTSTEFAEDALQFSMTKGLEVANTISPPGAVVQYVDQNVSQTNNQVSAMINKVLDVLKSILGVALGQSVIEQLTSAVTNTFTNLNTQKNEAWIFWGRETSTQTNYTYNVLFAIQNGQTGGVMYCVPVGFEIKVSAVKERVLFLTIQDSASYNVNIQSLKFAQPLVSASEYPIADLTSAINGTL</sequence>
<feature type="chain" id="PRO_0000174106" description="Type-1Ab cytolytic delta-endotoxin">
    <location>
        <begin position="1"/>
        <end position="250"/>
    </location>
</feature>
<dbReference type="EMBL" id="X98793">
    <property type="protein sequence ID" value="CAA67328.1"/>
    <property type="molecule type" value="Genomic_DNA"/>
</dbReference>
<dbReference type="SMR" id="P94594"/>
<dbReference type="GO" id="GO:0005576">
    <property type="term" value="C:extracellular region"/>
    <property type="evidence" value="ECO:0007669"/>
    <property type="project" value="InterPro"/>
</dbReference>
<dbReference type="GO" id="GO:0090729">
    <property type="term" value="F:toxin activity"/>
    <property type="evidence" value="ECO:0007669"/>
    <property type="project" value="UniProtKB-KW"/>
</dbReference>
<dbReference type="GO" id="GO:0030435">
    <property type="term" value="P:sporulation resulting in formation of a cellular spore"/>
    <property type="evidence" value="ECO:0007669"/>
    <property type="project" value="UniProtKB-KW"/>
</dbReference>
<dbReference type="Gene3D" id="3.40.198.10">
    <property type="entry name" value="Delta-endotoxin CytB-like"/>
    <property type="match status" value="1"/>
</dbReference>
<dbReference type="InterPro" id="IPR035918">
    <property type="entry name" value="CytB_endotoxin-like_sf"/>
</dbReference>
<dbReference type="InterPro" id="IPR001615">
    <property type="entry name" value="Endotoxin_CytB"/>
</dbReference>
<dbReference type="Pfam" id="PF01338">
    <property type="entry name" value="Bac_thur_toxin"/>
    <property type="match status" value="1"/>
</dbReference>
<dbReference type="SUPFAM" id="SSF55676">
    <property type="entry name" value="CytB endotoxin-like"/>
    <property type="match status" value="1"/>
</dbReference>
<comment type="function">
    <text>Kills the larvae of dipteran insects by making pores in the epithelial cell membrane of the insect midgut.</text>
</comment>
<comment type="developmental stage">
    <text>The crystal protein is produced during sporulation and is accumulated both as an inclusion and as part of the spore coat.</text>
</comment>
<comment type="PTM">
    <text>Active after proteolytic processing.</text>
</comment>
<comment type="similarity">
    <text evidence="1">Belongs to the cyt1/cyt2 endotoxin family.</text>
</comment>
<gene>
    <name type="primary">cyt1Ab1</name>
</gene>
<proteinExistence type="evidence at transcript level"/>
<evidence type="ECO:0000305" key="1"/>
<keyword id="KW-0749">Sporulation</keyword>
<keyword id="KW-0800">Toxin</keyword>
<keyword id="KW-0843">Virulence</keyword>
<protein>
    <recommendedName>
        <fullName>Type-1Ab cytolytic delta-endotoxin</fullName>
    </recommendedName>
    <alternativeName>
        <fullName>27 kDa cytolytic toxin</fullName>
    </alternativeName>
</protein>
<name>CT1AB_BACTV</name>